<accession>P30647</accession>
<accession>C9IY19</accession>
<accession>C9IY20</accession>
<feature type="chain" id="PRO_0000065532" description="Arrestin domain-containing protein 15">
    <location>
        <begin position="1"/>
        <end position="374"/>
    </location>
</feature>
<feature type="region of interest" description="Disordered" evidence="1">
    <location>
        <begin position="344"/>
        <end position="374"/>
    </location>
</feature>
<feature type="splice variant" id="VSP_039806" description="In isoform b." evidence="2">
    <location>
        <begin position="1"/>
        <end position="32"/>
    </location>
</feature>
<evidence type="ECO:0000256" key="1">
    <source>
        <dbReference type="SAM" id="MobiDB-lite"/>
    </source>
</evidence>
<evidence type="ECO:0000305" key="2"/>
<sequence>MPEVSNGRRPSVATFLRQFASTIIPLVNVKQSMPTTQINIVLAEPRCMAGEFFNAKVLLDSSDPDTVVHSFCAEIKGIGRTGWVNIHTDKIFETEKTYIDTQVQLCDSGTCLPVGKHQFPVQIRIPLNCPSSYESQFGSIRYQMKVELRASTDQASCSEVFPLVILTRSFFDDVPLNAMSPIDFKDEVDFTCCTLPFGCVSLNMSLTRTAFRIGESIEAVVTINNRTRKGLKEVALQLIMKTQFEARSRYEHVNEKKLAEQLIEMVPLGAVKSRCRMEFEKCLLRIPDAAPPTQNYNRGAGESSIIAIHYVLKLTALPGIECEIPLIVTSCGYMDPHKQAAFQHHLNRSKAKVSKTEQQQRKTRNIVEENPYFR</sequence>
<comment type="alternative products">
    <event type="alternative splicing"/>
    <isoform>
        <id>P30647-1</id>
        <name>a</name>
        <sequence type="displayed"/>
    </isoform>
    <isoform>
        <id>P30647-2</id>
        <name>b</name>
        <sequence type="described" ref="VSP_039806"/>
    </isoform>
</comment>
<comment type="similarity">
    <text evidence="2">Belongs to the arrestin family.</text>
</comment>
<protein>
    <recommendedName>
        <fullName>Arrestin domain-containing protein 15</fullName>
    </recommendedName>
</protein>
<proteinExistence type="inferred from homology"/>
<dbReference type="EMBL" id="Z11126">
    <property type="protein sequence ID" value="CBG22758.1"/>
    <property type="molecule type" value="Genomic_DNA"/>
</dbReference>
<dbReference type="EMBL" id="Z11126">
    <property type="protein sequence ID" value="CBG22759.1"/>
    <property type="molecule type" value="Genomic_DNA"/>
</dbReference>
<dbReference type="PIR" id="S23239">
    <property type="entry name" value="S23239"/>
</dbReference>
<dbReference type="RefSeq" id="NP_001254970.1">
    <molecule id="P30647-1"/>
    <property type="nucleotide sequence ID" value="NM_001268041.4"/>
</dbReference>
<dbReference type="RefSeq" id="NP_001254971.1">
    <molecule id="P30647-2"/>
    <property type="nucleotide sequence ID" value="NM_001268042.3"/>
</dbReference>
<dbReference type="SMR" id="P30647"/>
<dbReference type="FunCoup" id="P30647">
    <property type="interactions" value="28"/>
</dbReference>
<dbReference type="STRING" id="6239.ZK643.1a.1"/>
<dbReference type="PaxDb" id="6239-ZK643.1a"/>
<dbReference type="EnsemblMetazoa" id="ZK643.1a.1">
    <molecule id="P30647-1"/>
    <property type="protein sequence ID" value="ZK643.1a.1"/>
    <property type="gene ID" value="WBGene00014033"/>
</dbReference>
<dbReference type="EnsemblMetazoa" id="ZK643.1b.1">
    <molecule id="P30647-2"/>
    <property type="protein sequence ID" value="ZK643.1b.1"/>
    <property type="gene ID" value="WBGene00014033"/>
</dbReference>
<dbReference type="GeneID" id="191372"/>
<dbReference type="KEGG" id="cel:CELE_ZK643.1"/>
<dbReference type="UCSC" id="ZK643.1">
    <molecule id="P30647-1"/>
    <property type="organism name" value="c. elegans"/>
</dbReference>
<dbReference type="AGR" id="WB:WBGene00014033"/>
<dbReference type="CTD" id="191372"/>
<dbReference type="WormBase" id="ZK643.1a">
    <molecule id="P30647-1"/>
    <property type="protein sequence ID" value="CE44158"/>
    <property type="gene ID" value="WBGene00014033"/>
    <property type="gene designation" value="arrd-15"/>
</dbReference>
<dbReference type="WormBase" id="ZK643.1b">
    <molecule id="P30647-2"/>
    <property type="protein sequence ID" value="CE44174"/>
    <property type="gene ID" value="WBGene00014033"/>
    <property type="gene designation" value="arrd-15"/>
</dbReference>
<dbReference type="eggNOG" id="KOG3780">
    <property type="taxonomic scope" value="Eukaryota"/>
</dbReference>
<dbReference type="HOGENOM" id="CLU_809506_0_0_1"/>
<dbReference type="InParanoid" id="P30647"/>
<dbReference type="OMA" id="EVDFTCC"/>
<dbReference type="OrthoDB" id="2333384at2759"/>
<dbReference type="PhylomeDB" id="P30647"/>
<dbReference type="PRO" id="PR:P30647"/>
<dbReference type="Proteomes" id="UP000001940">
    <property type="component" value="Chromosome III"/>
</dbReference>
<dbReference type="Bgee" id="WBGene00014033">
    <property type="expression patterns" value="Expressed in larva and 3 other cell types or tissues"/>
</dbReference>
<dbReference type="ExpressionAtlas" id="P30647">
    <property type="expression patterns" value="baseline and differential"/>
</dbReference>
<dbReference type="GO" id="GO:0005737">
    <property type="term" value="C:cytoplasm"/>
    <property type="evidence" value="ECO:0007005"/>
    <property type="project" value="WormBase"/>
</dbReference>
<dbReference type="GO" id="GO:0055120">
    <property type="term" value="C:striated muscle dense body"/>
    <property type="evidence" value="ECO:0007005"/>
    <property type="project" value="WormBase"/>
</dbReference>
<dbReference type="GO" id="GO:0015031">
    <property type="term" value="P:protein transport"/>
    <property type="evidence" value="ECO:0000318"/>
    <property type="project" value="GO_Central"/>
</dbReference>
<dbReference type="Gene3D" id="2.60.40.640">
    <property type="match status" value="2"/>
</dbReference>
<dbReference type="InterPro" id="IPR014752">
    <property type="entry name" value="Arrestin-like_C"/>
</dbReference>
<dbReference type="InterPro" id="IPR011021">
    <property type="entry name" value="Arrestin-like_N"/>
</dbReference>
<dbReference type="InterPro" id="IPR011022">
    <property type="entry name" value="Arrestin_C-like"/>
</dbReference>
<dbReference type="InterPro" id="IPR050357">
    <property type="entry name" value="Arrestin_domain-protein"/>
</dbReference>
<dbReference type="InterPro" id="IPR014756">
    <property type="entry name" value="Ig_E-set"/>
</dbReference>
<dbReference type="PANTHER" id="PTHR11188">
    <property type="entry name" value="ARRESTIN DOMAIN CONTAINING PROTEIN"/>
    <property type="match status" value="1"/>
</dbReference>
<dbReference type="PANTHER" id="PTHR11188:SF51">
    <property type="entry name" value="ARRESTIN DOMAIN-CONTAINING PROTEIN 15"/>
    <property type="match status" value="1"/>
</dbReference>
<dbReference type="Pfam" id="PF02752">
    <property type="entry name" value="Arrestin_C"/>
    <property type="match status" value="1"/>
</dbReference>
<dbReference type="Pfam" id="PF00339">
    <property type="entry name" value="Arrestin_N"/>
    <property type="match status" value="1"/>
</dbReference>
<dbReference type="SMART" id="SM01017">
    <property type="entry name" value="Arrestin_C"/>
    <property type="match status" value="1"/>
</dbReference>
<dbReference type="SUPFAM" id="SSF81296">
    <property type="entry name" value="E set domains"/>
    <property type="match status" value="2"/>
</dbReference>
<keyword id="KW-0025">Alternative splicing</keyword>
<keyword id="KW-1185">Reference proteome</keyword>
<gene>
    <name type="primary">arrd-15</name>
    <name type="ORF">ZK643.1</name>
</gene>
<name>ARD15_CAEEL</name>
<organism>
    <name type="scientific">Caenorhabditis elegans</name>
    <dbReference type="NCBI Taxonomy" id="6239"/>
    <lineage>
        <taxon>Eukaryota</taxon>
        <taxon>Metazoa</taxon>
        <taxon>Ecdysozoa</taxon>
        <taxon>Nematoda</taxon>
        <taxon>Chromadorea</taxon>
        <taxon>Rhabditida</taxon>
        <taxon>Rhabditina</taxon>
        <taxon>Rhabditomorpha</taxon>
        <taxon>Rhabditoidea</taxon>
        <taxon>Rhabditidae</taxon>
        <taxon>Peloderinae</taxon>
        <taxon>Caenorhabditis</taxon>
    </lineage>
</organism>
<reference key="1">
    <citation type="journal article" date="1992" name="Nature">
        <title>The C. elegans genome sequencing project: a beginning.</title>
        <authorList>
            <person name="Sulston J."/>
            <person name="Du Z."/>
            <person name="Thomas K."/>
            <person name="Wilson R."/>
            <person name="Hillier L."/>
            <person name="Staden R."/>
            <person name="Halloran N."/>
            <person name="Green P."/>
            <person name="Thierry-Mieg J."/>
            <person name="Qiu L."/>
            <person name="Dear S."/>
            <person name="Coulson A."/>
            <person name="Craxton M."/>
            <person name="Durbin R."/>
            <person name="Berks M."/>
            <person name="Metzstein M."/>
            <person name="Hawkins T."/>
            <person name="Ainscough R."/>
            <person name="Waterston R."/>
        </authorList>
    </citation>
    <scope>NUCLEOTIDE SEQUENCE [LARGE SCALE GENOMIC DNA]</scope>
    <source>
        <strain>Bristol N2</strain>
    </source>
</reference>
<reference key="2">
    <citation type="journal article" date="1998" name="Science">
        <title>Genome sequence of the nematode C. elegans: a platform for investigating biology.</title>
        <authorList>
            <consortium name="The C. elegans sequencing consortium"/>
        </authorList>
    </citation>
    <scope>NUCLEOTIDE SEQUENCE [LARGE SCALE GENOMIC DNA]</scope>
    <scope>ALTERNATIVE SPLICING</scope>
    <source>
        <strain>Bristol N2</strain>
    </source>
</reference>